<keyword id="KW-0472">Membrane</keyword>
<keyword id="KW-0496">Mitochondrion</keyword>
<keyword id="KW-1185">Reference proteome</keyword>
<keyword id="KW-0812">Transmembrane</keyword>
<keyword id="KW-1133">Transmembrane helix</keyword>
<comment type="subcellular location">
    <subcellularLocation>
        <location evidence="2">Mitochondrion membrane</location>
        <topology evidence="2">Single-pass membrane protein</topology>
    </subcellularLocation>
</comment>
<comment type="miscellaneous">
    <text>A stretch of 270 kb of the mitochondrial genome is duplicated within the centromere of chromosome 2 resulting in the duplication of the gene. The expression of the duplicated gene (At2g07697) is not demonstrated.</text>
</comment>
<organism>
    <name type="scientific">Arabidopsis thaliana</name>
    <name type="common">Mouse-ear cress</name>
    <dbReference type="NCBI Taxonomy" id="3702"/>
    <lineage>
        <taxon>Eukaryota</taxon>
        <taxon>Viridiplantae</taxon>
        <taxon>Streptophyta</taxon>
        <taxon>Embryophyta</taxon>
        <taxon>Tracheophyta</taxon>
        <taxon>Spermatophyta</taxon>
        <taxon>Magnoliopsida</taxon>
        <taxon>eudicotyledons</taxon>
        <taxon>Gunneridae</taxon>
        <taxon>Pentapetalae</taxon>
        <taxon>rosids</taxon>
        <taxon>malvids</taxon>
        <taxon>Brassicales</taxon>
        <taxon>Brassicaceae</taxon>
        <taxon>Camelineae</taxon>
        <taxon>Arabidopsis</taxon>
    </lineage>
</organism>
<reference key="1">
    <citation type="journal article" date="1997" name="Nat. Genet.">
        <title>The mitochondrial genome of Arabidopsis thaliana contains 57 genes in 366,924 nucleotides.</title>
        <authorList>
            <person name="Unseld M."/>
            <person name="Marienfeld J.R."/>
            <person name="Brandt P."/>
            <person name="Brennicke A."/>
        </authorList>
    </citation>
    <scope>NUCLEOTIDE SEQUENCE [LARGE SCALE GENOMIC DNA]</scope>
    <source>
        <strain>cv. C24</strain>
    </source>
</reference>
<reference key="2">
    <citation type="journal article" date="2018" name="Plant Cell">
        <title>Correction of persistent errors in Arabidopsis reference mitochondrial genomes.</title>
        <authorList>
            <person name="Sloan D.B."/>
            <person name="Wu Z."/>
            <person name="Sharbrough J."/>
        </authorList>
    </citation>
    <scope>NUCLEOTIDE SEQUENCE [LARGE SCALE GENOMIC DNA]</scope>
    <source>
        <strain>cv. Columbia</strain>
    </source>
</reference>
<reference key="3">
    <citation type="journal article" date="1999" name="Nature">
        <title>Sequence and analysis of chromosome 2 of the plant Arabidopsis thaliana.</title>
        <authorList>
            <person name="Lin X."/>
            <person name="Kaul S."/>
            <person name="Rounsley S.D."/>
            <person name="Shea T.P."/>
            <person name="Benito M.-I."/>
            <person name="Town C.D."/>
            <person name="Fujii C.Y."/>
            <person name="Mason T.M."/>
            <person name="Bowman C.L."/>
            <person name="Barnstead M.E."/>
            <person name="Feldblyum T.V."/>
            <person name="Buell C.R."/>
            <person name="Ketchum K.A."/>
            <person name="Lee J.J."/>
            <person name="Ronning C.M."/>
            <person name="Koo H.L."/>
            <person name="Moffat K.S."/>
            <person name="Cronin L.A."/>
            <person name="Shen M."/>
            <person name="Pai G."/>
            <person name="Van Aken S."/>
            <person name="Umayam L."/>
            <person name="Tallon L.J."/>
            <person name="Gill J.E."/>
            <person name="Adams M.D."/>
            <person name="Carrera A.J."/>
            <person name="Creasy T.H."/>
            <person name="Goodman H.M."/>
            <person name="Somerville C.R."/>
            <person name="Copenhaver G.P."/>
            <person name="Preuss D."/>
            <person name="Nierman W.C."/>
            <person name="White O."/>
            <person name="Eisen J.A."/>
            <person name="Salzberg S.L."/>
            <person name="Fraser C.M."/>
            <person name="Venter J.C."/>
        </authorList>
    </citation>
    <scope>NUCLEOTIDE SEQUENCE [LARGE SCALE GENOMIC DNA] (AT2G07697)</scope>
    <source>
        <strain>cv. Columbia</strain>
    </source>
</reference>
<reference key="4">
    <citation type="journal article" date="2017" name="Plant J.">
        <title>Araport11: a complete reannotation of the Arabidopsis thaliana reference genome.</title>
        <authorList>
            <person name="Cheng C.Y."/>
            <person name="Krishnakumar V."/>
            <person name="Chan A.P."/>
            <person name="Thibaud-Nissen F."/>
            <person name="Schobel S."/>
            <person name="Town C.D."/>
        </authorList>
    </citation>
    <scope>GENOME REANNOTATION (AT2G07697)</scope>
    <source>
        <strain>cv. Columbia</strain>
    </source>
</reference>
<accession>P92553</accession>
<accession>Q1ZXW4</accession>
<geneLocation type="mitochondrion"/>
<sequence>MWSYEGKCGFLLLSVYKEQVLDSYSPLTKENGISSNPRYIKRKFPFDSGFPFTRKLPAKVESFLCLPLFLSFLVANLILWLSFHSARVGHQKLSYHLLEWKAFPSSFRNKESKATCDLSSWSNPYFKRKAQIPFSFSRYLLKYLF</sequence>
<proteinExistence type="predicted"/>
<feature type="chain" id="PRO_0000196819" description="Uncharacterized mitochondrial protein AtMg01230">
    <location>
        <begin position="1"/>
        <end position="145"/>
    </location>
</feature>
<feature type="transmembrane region" description="Helical" evidence="1">
    <location>
        <begin position="63"/>
        <end position="83"/>
    </location>
</feature>
<evidence type="ECO:0000255" key="1"/>
<evidence type="ECO:0000305" key="2"/>
<evidence type="ECO:0000312" key="3">
    <source>
        <dbReference type="Araport" id="AT2G07697"/>
    </source>
</evidence>
<evidence type="ECO:0000312" key="4">
    <source>
        <dbReference type="Araport" id="ATMG01230"/>
    </source>
</evidence>
<gene>
    <name evidence="4" type="ordered locus">AtMg01230</name>
</gene>
<gene>
    <name evidence="3" type="ordered locus">At2g07697</name>
</gene>
<name>M1230_ARATH</name>
<dbReference type="EMBL" id="Y08501">
    <property type="protein sequence ID" value="CAA69806.1"/>
    <property type="molecule type" value="Genomic_DNA"/>
</dbReference>
<dbReference type="EMBL" id="BK010421">
    <property type="status" value="NOT_ANNOTATED_CDS"/>
    <property type="molecule type" value="Genomic_DNA"/>
</dbReference>
<dbReference type="EMBL" id="AC007730">
    <property type="status" value="NOT_ANNOTATED_CDS"/>
    <property type="molecule type" value="Genomic_DNA"/>
</dbReference>
<dbReference type="EMBL" id="CP002685">
    <property type="status" value="NOT_ANNOTATED_CDS"/>
    <property type="molecule type" value="Genomic_DNA"/>
</dbReference>
<dbReference type="RefSeq" id="NP_085575.1">
    <property type="nucleotide sequence ID" value="NC_001284.2"/>
</dbReference>
<dbReference type="PaxDb" id="3702-ATMG01230.1"/>
<dbReference type="EnsemblPlants" id="ATMG01230.1">
    <property type="protein sequence ID" value="ATMG01230.1"/>
    <property type="gene ID" value="ATMG01230"/>
</dbReference>
<dbReference type="Gramene" id="ATMG01230.1">
    <property type="protein sequence ID" value="ATMG01230.1"/>
    <property type="gene ID" value="ATMG01230"/>
</dbReference>
<dbReference type="Araport" id="AT2G07697"/>
<dbReference type="Araport" id="ATMG01230"/>
<dbReference type="TAIR" id="AT2G07697"/>
<dbReference type="TAIR" id="ATMG01230">
    <property type="gene designation" value="ORF145B"/>
</dbReference>
<dbReference type="HOGENOM" id="CLU_1789508_0_0_1"/>
<dbReference type="InParanoid" id="P92553"/>
<dbReference type="Proteomes" id="UP000006548">
    <property type="component" value="Chromosome 2"/>
</dbReference>
<dbReference type="Proteomes" id="UP000006548">
    <property type="component" value="Mitochondrion MT"/>
</dbReference>
<dbReference type="ExpressionAtlas" id="P92553">
    <property type="expression patterns" value="baseline and differential"/>
</dbReference>
<dbReference type="GO" id="GO:0031966">
    <property type="term" value="C:mitochondrial membrane"/>
    <property type="evidence" value="ECO:0007669"/>
    <property type="project" value="UniProtKB-SubCell"/>
</dbReference>
<protein>
    <recommendedName>
        <fullName>Uncharacterized mitochondrial protein AtMg01230</fullName>
    </recommendedName>
    <alternativeName>
        <fullName>ORF145b</fullName>
    </alternativeName>
</protein>